<proteinExistence type="inferred from homology"/>
<evidence type="ECO:0000250" key="1">
    <source>
        <dbReference type="UniProtKB" id="P03897"/>
    </source>
</evidence>
<evidence type="ECO:0000250" key="2">
    <source>
        <dbReference type="UniProtKB" id="P03898"/>
    </source>
</evidence>
<evidence type="ECO:0000255" key="3"/>
<evidence type="ECO:0000305" key="4"/>
<geneLocation type="mitochondrion"/>
<keyword id="KW-0249">Electron transport</keyword>
<keyword id="KW-0472">Membrane</keyword>
<keyword id="KW-0496">Mitochondrion</keyword>
<keyword id="KW-0999">Mitochondrion inner membrane</keyword>
<keyword id="KW-0520">NAD</keyword>
<keyword id="KW-0679">Respiratory chain</keyword>
<keyword id="KW-1278">Translocase</keyword>
<keyword id="KW-0812">Transmembrane</keyword>
<keyword id="KW-1133">Transmembrane helix</keyword>
<keyword id="KW-0813">Transport</keyword>
<keyword id="KW-0830">Ubiquinone</keyword>
<comment type="function">
    <text evidence="1">Core subunit of the mitochondrial membrane respiratory chain NADH dehydrogenase (Complex I) which catalyzes electron transfer from NADH through the respiratory chain, using ubiquinone as an electron acceptor. Essential for the catalytic activity of complex I.</text>
</comment>
<comment type="catalytic activity">
    <reaction evidence="1">
        <text>a ubiquinone + NADH + 5 H(+)(in) = a ubiquinol + NAD(+) + 4 H(+)(out)</text>
        <dbReference type="Rhea" id="RHEA:29091"/>
        <dbReference type="Rhea" id="RHEA-COMP:9565"/>
        <dbReference type="Rhea" id="RHEA-COMP:9566"/>
        <dbReference type="ChEBI" id="CHEBI:15378"/>
        <dbReference type="ChEBI" id="CHEBI:16389"/>
        <dbReference type="ChEBI" id="CHEBI:17976"/>
        <dbReference type="ChEBI" id="CHEBI:57540"/>
        <dbReference type="ChEBI" id="CHEBI:57945"/>
        <dbReference type="EC" id="7.1.1.2"/>
    </reaction>
</comment>
<comment type="subunit">
    <text evidence="1">Core subunit of respiratory chain NADH dehydrogenase (Complex I) which is composed of 45 different subunits. Interacts with TMEM186. Interacts with TMEM242 (By similarity).</text>
</comment>
<comment type="subcellular location">
    <subcellularLocation>
        <location evidence="2">Mitochondrion inner membrane</location>
        <topology evidence="3">Multi-pass membrane protein</topology>
    </subcellularLocation>
</comment>
<comment type="similarity">
    <text evidence="4">Belongs to the complex I subunit 3 family.</text>
</comment>
<feature type="chain" id="PRO_0000323383" description="NADH-ubiquinone oxidoreductase chain 3">
    <location>
        <begin position="1"/>
        <end position="115"/>
    </location>
</feature>
<feature type="transmembrane region" description="Helical" evidence="3">
    <location>
        <begin position="5"/>
        <end position="25"/>
    </location>
</feature>
<feature type="transmembrane region" description="Helical" evidence="3">
    <location>
        <begin position="55"/>
        <end position="75"/>
    </location>
</feature>
<feature type="transmembrane region" description="Helical" evidence="3">
    <location>
        <begin position="86"/>
        <end position="106"/>
    </location>
</feature>
<protein>
    <recommendedName>
        <fullName evidence="1">NADH-ubiquinone oxidoreductase chain 3</fullName>
        <ecNumber evidence="1">7.1.1.2</ecNumber>
    </recommendedName>
    <alternativeName>
        <fullName>NADH dehydrogenase subunit 3</fullName>
    </alternativeName>
</protein>
<reference key="1">
    <citation type="journal article" date="2007" name="Spec. Publ. Mus. Tex. Tech. Univ.">
        <title>Molecular phylogeny and taxonomic revision of the woolly lemurs, genus Avahi (primates: lemuriformes).</title>
        <authorList>
            <person name="Andriantompohavana R."/>
            <person name="Lei R."/>
            <person name="Zaonarivelo J.R."/>
            <person name="Engberg S.E."/>
            <person name="Nalanirina G."/>
            <person name="McGuire S.M."/>
            <person name="Shore G.D."/>
            <person name="Andrianasolo J."/>
            <person name="Herrington K."/>
            <person name="Brenneman R.A."/>
            <person name="Louis E.E. Jr."/>
        </authorList>
    </citation>
    <scope>NUCLEOTIDE SEQUENCE [GENOMIC DNA]</scope>
    <source>
        <strain>Isolate ANT5.10</strain>
        <strain>Isolate ANT5.12</strain>
        <strain>Isolate ANT5.8</strain>
        <strain>Isolate ANT5.9</strain>
    </source>
</reference>
<gene>
    <name evidence="1" type="primary">MT-ND3</name>
    <name type="synonym">MTND3</name>
    <name type="synonym">NADH3</name>
    <name type="synonym">ND3</name>
</gene>
<name>NU3M_AVAUN</name>
<sequence length="115" mass="13120">MNLSLTFMTDVILALLLVMIAFWLPQLNIYTEKYSSYECGFDPMGSARLPFSMKFFLVAITFLLFDLEIALLLPLPWASQTTNLKLMLTMALLLISILAAGLAYEWSQKGLEWEE</sequence>
<dbReference type="EC" id="7.1.1.2" evidence="1"/>
<dbReference type="EMBL" id="DQ856109">
    <property type="protein sequence ID" value="ABI54979.1"/>
    <property type="molecule type" value="Genomic_DNA"/>
</dbReference>
<dbReference type="EMBL" id="DQ856110">
    <property type="protein sequence ID" value="ABI54983.1"/>
    <property type="molecule type" value="Genomic_DNA"/>
</dbReference>
<dbReference type="EMBL" id="DQ856111">
    <property type="protein sequence ID" value="ABI54987.1"/>
    <property type="molecule type" value="Genomic_DNA"/>
</dbReference>
<dbReference type="EMBL" id="DQ856112">
    <property type="protein sequence ID" value="ABI54991.1"/>
    <property type="molecule type" value="Genomic_DNA"/>
</dbReference>
<dbReference type="SMR" id="A8DQI7"/>
<dbReference type="GO" id="GO:0005743">
    <property type="term" value="C:mitochondrial inner membrane"/>
    <property type="evidence" value="ECO:0000250"/>
    <property type="project" value="UniProtKB"/>
</dbReference>
<dbReference type="GO" id="GO:0030964">
    <property type="term" value="C:NADH dehydrogenase complex"/>
    <property type="evidence" value="ECO:0007669"/>
    <property type="project" value="TreeGrafter"/>
</dbReference>
<dbReference type="GO" id="GO:0008137">
    <property type="term" value="F:NADH dehydrogenase (ubiquinone) activity"/>
    <property type="evidence" value="ECO:0000250"/>
    <property type="project" value="UniProtKB"/>
</dbReference>
<dbReference type="GO" id="GO:0006120">
    <property type="term" value="P:mitochondrial electron transport, NADH to ubiquinone"/>
    <property type="evidence" value="ECO:0000250"/>
    <property type="project" value="UniProtKB"/>
</dbReference>
<dbReference type="FunFam" id="1.20.58.1610:FF:000004">
    <property type="entry name" value="NADH-quinone oxidoreductase subunit A"/>
    <property type="match status" value="1"/>
</dbReference>
<dbReference type="Gene3D" id="1.20.58.1610">
    <property type="entry name" value="NADH:ubiquinone/plastoquinone oxidoreductase, chain 3"/>
    <property type="match status" value="1"/>
</dbReference>
<dbReference type="InterPro" id="IPR000440">
    <property type="entry name" value="NADH_UbQ/plastoQ_OxRdtase_su3"/>
</dbReference>
<dbReference type="InterPro" id="IPR038430">
    <property type="entry name" value="NDAH_ubi_oxred_su3_sf"/>
</dbReference>
<dbReference type="PANTHER" id="PTHR11058">
    <property type="entry name" value="NADH-UBIQUINONE OXIDOREDUCTASE CHAIN 3"/>
    <property type="match status" value="1"/>
</dbReference>
<dbReference type="PANTHER" id="PTHR11058:SF9">
    <property type="entry name" value="NADH-UBIQUINONE OXIDOREDUCTASE CHAIN 3"/>
    <property type="match status" value="1"/>
</dbReference>
<dbReference type="Pfam" id="PF00507">
    <property type="entry name" value="Oxidored_q4"/>
    <property type="match status" value="1"/>
</dbReference>
<organism>
    <name type="scientific">Avahi unicolor</name>
    <name type="common">Sambirano woolly lemur</name>
    <dbReference type="NCBI Taxonomy" id="402239"/>
    <lineage>
        <taxon>Eukaryota</taxon>
        <taxon>Metazoa</taxon>
        <taxon>Chordata</taxon>
        <taxon>Craniata</taxon>
        <taxon>Vertebrata</taxon>
        <taxon>Euteleostomi</taxon>
        <taxon>Mammalia</taxon>
        <taxon>Eutheria</taxon>
        <taxon>Euarchontoglires</taxon>
        <taxon>Primates</taxon>
        <taxon>Strepsirrhini</taxon>
        <taxon>Lemuriformes</taxon>
        <taxon>Indriidae</taxon>
        <taxon>Avahi</taxon>
    </lineage>
</organism>
<accession>A8DQI7</accession>